<accession>Q8GX29</accession>
<accession>Q9SHE6</accession>
<feature type="chain" id="PRO_0000283179" description="F-box/kelch-repeat protein SKIP25">
    <location>
        <begin position="1"/>
        <end position="395"/>
    </location>
</feature>
<feature type="domain" description="F-box">
    <location>
        <begin position="34"/>
        <end position="79"/>
    </location>
</feature>
<feature type="repeat" description="Kelch 1">
    <location>
        <begin position="81"/>
        <end position="129"/>
    </location>
</feature>
<feature type="repeat" description="Kelch 2">
    <location>
        <begin position="147"/>
        <end position="194"/>
    </location>
</feature>
<feature type="repeat" description="Kelch 3">
    <location>
        <begin position="196"/>
        <end position="245"/>
    </location>
</feature>
<feature type="repeat" description="Kelch 4">
    <location>
        <begin position="246"/>
        <end position="299"/>
    </location>
</feature>
<feature type="repeat" description="Kelch 5">
    <location>
        <begin position="301"/>
        <end position="342"/>
    </location>
</feature>
<feature type="region of interest" description="Disordered" evidence="2">
    <location>
        <begin position="1"/>
        <end position="29"/>
    </location>
</feature>
<evidence type="ECO:0000250" key="1"/>
<evidence type="ECO:0000256" key="2">
    <source>
        <dbReference type="SAM" id="MobiDB-lite"/>
    </source>
</evidence>
<evidence type="ECO:0000269" key="3">
    <source>
    </source>
</evidence>
<evidence type="ECO:0000305" key="4"/>
<organism>
    <name type="scientific">Arabidopsis thaliana</name>
    <name type="common">Mouse-ear cress</name>
    <dbReference type="NCBI Taxonomy" id="3702"/>
    <lineage>
        <taxon>Eukaryota</taxon>
        <taxon>Viridiplantae</taxon>
        <taxon>Streptophyta</taxon>
        <taxon>Embryophyta</taxon>
        <taxon>Tracheophyta</taxon>
        <taxon>Spermatophyta</taxon>
        <taxon>Magnoliopsida</taxon>
        <taxon>eudicotyledons</taxon>
        <taxon>Gunneridae</taxon>
        <taxon>Pentapetalae</taxon>
        <taxon>rosids</taxon>
        <taxon>malvids</taxon>
        <taxon>Brassicales</taxon>
        <taxon>Brassicaceae</taxon>
        <taxon>Camelineae</taxon>
        <taxon>Arabidopsis</taxon>
    </lineage>
</organism>
<dbReference type="EMBL" id="AC007654">
    <property type="protein sequence ID" value="AAF24593.1"/>
    <property type="status" value="ALT_SEQ"/>
    <property type="molecule type" value="Genomic_DNA"/>
</dbReference>
<dbReference type="EMBL" id="CP002684">
    <property type="protein sequence ID" value="AEE31345.1"/>
    <property type="molecule type" value="Genomic_DNA"/>
</dbReference>
<dbReference type="EMBL" id="AK118467">
    <property type="protein sequence ID" value="BAC43075.1"/>
    <property type="molecule type" value="mRNA"/>
</dbReference>
<dbReference type="EMBL" id="BT005351">
    <property type="protein sequence ID" value="AAO63415.1"/>
    <property type="molecule type" value="mRNA"/>
</dbReference>
<dbReference type="RefSeq" id="NP_174420.1">
    <property type="nucleotide sequence ID" value="NM_102874.4"/>
</dbReference>
<dbReference type="SMR" id="Q8GX29"/>
<dbReference type="BioGRID" id="25259">
    <property type="interactions" value="8"/>
</dbReference>
<dbReference type="FunCoup" id="Q8GX29">
    <property type="interactions" value="56"/>
</dbReference>
<dbReference type="IntAct" id="Q8GX29">
    <property type="interactions" value="8"/>
</dbReference>
<dbReference type="STRING" id="3702.Q8GX29"/>
<dbReference type="PaxDb" id="3702-AT1G31350.1"/>
<dbReference type="DNASU" id="840024"/>
<dbReference type="EnsemblPlants" id="AT1G31350.1">
    <property type="protein sequence ID" value="AT1G31350.1"/>
    <property type="gene ID" value="AT1G31350"/>
</dbReference>
<dbReference type="GeneID" id="840024"/>
<dbReference type="Gramene" id="AT1G31350.1">
    <property type="protein sequence ID" value="AT1G31350.1"/>
    <property type="gene ID" value="AT1G31350"/>
</dbReference>
<dbReference type="KEGG" id="ath:AT1G31350"/>
<dbReference type="Araport" id="AT1G31350"/>
<dbReference type="TAIR" id="AT1G31350">
    <property type="gene designation" value="KUF1"/>
</dbReference>
<dbReference type="eggNOG" id="KOG1072">
    <property type="taxonomic scope" value="Eukaryota"/>
</dbReference>
<dbReference type="HOGENOM" id="CLU_040372_0_0_1"/>
<dbReference type="InParanoid" id="Q8GX29"/>
<dbReference type="PhylomeDB" id="Q8GX29"/>
<dbReference type="UniPathway" id="UPA00143"/>
<dbReference type="PRO" id="PR:Q8GX29"/>
<dbReference type="Proteomes" id="UP000006548">
    <property type="component" value="Chromosome 1"/>
</dbReference>
<dbReference type="ExpressionAtlas" id="Q8GX29">
    <property type="expression patterns" value="baseline and differential"/>
</dbReference>
<dbReference type="GO" id="GO:0005634">
    <property type="term" value="C:nucleus"/>
    <property type="evidence" value="ECO:0007669"/>
    <property type="project" value="UniProtKB-SubCell"/>
</dbReference>
<dbReference type="GO" id="GO:0016567">
    <property type="term" value="P:protein ubiquitination"/>
    <property type="evidence" value="ECO:0007669"/>
    <property type="project" value="UniProtKB-UniPathway"/>
</dbReference>
<dbReference type="Gene3D" id="2.120.10.80">
    <property type="entry name" value="Kelch-type beta propeller"/>
    <property type="match status" value="1"/>
</dbReference>
<dbReference type="InterPro" id="IPR036047">
    <property type="entry name" value="F-box-like_dom_sf"/>
</dbReference>
<dbReference type="InterPro" id="IPR015915">
    <property type="entry name" value="Kelch-typ_b-propeller"/>
</dbReference>
<dbReference type="PANTHER" id="PTHR47590">
    <property type="entry name" value="F-BOX/KELCH-REPEAT PROTEIN SKIP25"/>
    <property type="match status" value="1"/>
</dbReference>
<dbReference type="PANTHER" id="PTHR47590:SF1">
    <property type="entry name" value="F-BOX_KELCH-REPEAT PROTEIN SKIP25"/>
    <property type="match status" value="1"/>
</dbReference>
<dbReference type="Pfam" id="PF25210">
    <property type="entry name" value="Kelch_FKB95"/>
    <property type="match status" value="1"/>
</dbReference>
<dbReference type="SUPFAM" id="SSF81383">
    <property type="entry name" value="F-box domain"/>
    <property type="match status" value="1"/>
</dbReference>
<dbReference type="SUPFAM" id="SSF117281">
    <property type="entry name" value="Kelch motif"/>
    <property type="match status" value="1"/>
</dbReference>
<comment type="function">
    <text evidence="1">Component of SCF(ASK-cullin-F-box) E3 ubiquitin ligase complexes, which may mediate the ubiquitination and subsequent proteasomal degradation of target proteins.</text>
</comment>
<comment type="pathway">
    <text>Protein modification; protein ubiquitination.</text>
</comment>
<comment type="subunit">
    <text evidence="1 3">Part of a SCF (ASK-cullin-F-box) protein ligase complex (By similarity). Interacts with SKP1A/ASK1.</text>
</comment>
<comment type="interaction">
    <interactant intactId="EBI-604376">
        <id>Q8GX29</id>
    </interactant>
    <interactant intactId="EBI-604076">
        <id>Q9FHW7</id>
        <label>SKP1B</label>
    </interactant>
    <organismsDiffer>false</organismsDiffer>
    <experiments>3</experiments>
</comment>
<comment type="subcellular location">
    <subcellularLocation>
        <location evidence="1">Nucleus</location>
    </subcellularLocation>
</comment>
<comment type="domain">
    <text evidence="1">The F-box is necessary for the interaction with ASK proteins.</text>
</comment>
<comment type="sequence caution" evidence="4">
    <conflict type="erroneous gene model prediction">
        <sequence resource="EMBL-CDS" id="AAF24593"/>
    </conflict>
</comment>
<sequence length="395" mass="44149">MEKKLKRRESMSTTAAESPPAKRRRTVTGNENSALIEGLPDHISEICLSLVHRPSLLSAVCTRWRRLLYSPEFPSFPSLYALFVDSTSDTGRVNPSVRFMCFNPVSSKWYPLPPPPPDPPLHRILYRHPSFISFNLPIQCVSAAGKLILIAGSNQQLSPAISHPLIFDPISSSWSSGPRIGSPRRWCATGACDGAIYIASGISSQFSSTVAKSVEKLDLTEQNRNNHRFNWEKLRDMRDLRFSREAIDAVGYRRKLLMVNVKGDAVKEGAIYDVVKDDWEPMPEEMLVGWRGPVAAMEEEILYSVDERRGTVRKYDDEKREWREVVVVEGGEEMLKGATQVTADSGKLCVVTGDGKIVVVDVAAEPAKIWNVEIPDGLEPVSVHVLPRMSQPNFC</sequence>
<keyword id="KW-0880">Kelch repeat</keyword>
<keyword id="KW-0539">Nucleus</keyword>
<keyword id="KW-1185">Reference proteome</keyword>
<keyword id="KW-0677">Repeat</keyword>
<keyword id="KW-0833">Ubl conjugation pathway</keyword>
<proteinExistence type="evidence at protein level"/>
<name>SKI25_ARATH</name>
<protein>
    <recommendedName>
        <fullName>F-box/kelch-repeat protein SKIP25</fullName>
    </recommendedName>
    <alternativeName>
        <fullName>SKP1-interacting partner 25</fullName>
    </alternativeName>
</protein>
<gene>
    <name type="primary">SKIP25</name>
    <name type="ordered locus">At1g31350</name>
    <name type="ORF">T19E23.14</name>
</gene>
<reference key="1">
    <citation type="journal article" date="2000" name="Nature">
        <title>Sequence and analysis of chromosome 1 of the plant Arabidopsis thaliana.</title>
        <authorList>
            <person name="Theologis A."/>
            <person name="Ecker J.R."/>
            <person name="Palm C.J."/>
            <person name="Federspiel N.A."/>
            <person name="Kaul S."/>
            <person name="White O."/>
            <person name="Alonso J."/>
            <person name="Altafi H."/>
            <person name="Araujo R."/>
            <person name="Bowman C.L."/>
            <person name="Brooks S.Y."/>
            <person name="Buehler E."/>
            <person name="Chan A."/>
            <person name="Chao Q."/>
            <person name="Chen H."/>
            <person name="Cheuk R.F."/>
            <person name="Chin C.W."/>
            <person name="Chung M.K."/>
            <person name="Conn L."/>
            <person name="Conway A.B."/>
            <person name="Conway A.R."/>
            <person name="Creasy T.H."/>
            <person name="Dewar K."/>
            <person name="Dunn P."/>
            <person name="Etgu P."/>
            <person name="Feldblyum T.V."/>
            <person name="Feng J.-D."/>
            <person name="Fong B."/>
            <person name="Fujii C.Y."/>
            <person name="Gill J.E."/>
            <person name="Goldsmith A.D."/>
            <person name="Haas B."/>
            <person name="Hansen N.F."/>
            <person name="Hughes B."/>
            <person name="Huizar L."/>
            <person name="Hunter J.L."/>
            <person name="Jenkins J."/>
            <person name="Johnson-Hopson C."/>
            <person name="Khan S."/>
            <person name="Khaykin E."/>
            <person name="Kim C.J."/>
            <person name="Koo H.L."/>
            <person name="Kremenetskaia I."/>
            <person name="Kurtz D.B."/>
            <person name="Kwan A."/>
            <person name="Lam B."/>
            <person name="Langin-Hooper S."/>
            <person name="Lee A."/>
            <person name="Lee J.M."/>
            <person name="Lenz C.A."/>
            <person name="Li J.H."/>
            <person name="Li Y.-P."/>
            <person name="Lin X."/>
            <person name="Liu S.X."/>
            <person name="Liu Z.A."/>
            <person name="Luros J.S."/>
            <person name="Maiti R."/>
            <person name="Marziali A."/>
            <person name="Militscher J."/>
            <person name="Miranda M."/>
            <person name="Nguyen M."/>
            <person name="Nierman W.C."/>
            <person name="Osborne B.I."/>
            <person name="Pai G."/>
            <person name="Peterson J."/>
            <person name="Pham P.K."/>
            <person name="Rizzo M."/>
            <person name="Rooney T."/>
            <person name="Rowley D."/>
            <person name="Sakano H."/>
            <person name="Salzberg S.L."/>
            <person name="Schwartz J.R."/>
            <person name="Shinn P."/>
            <person name="Southwick A.M."/>
            <person name="Sun H."/>
            <person name="Tallon L.J."/>
            <person name="Tambunga G."/>
            <person name="Toriumi M.J."/>
            <person name="Town C.D."/>
            <person name="Utterback T."/>
            <person name="Van Aken S."/>
            <person name="Vaysberg M."/>
            <person name="Vysotskaia V.S."/>
            <person name="Walker M."/>
            <person name="Wu D."/>
            <person name="Yu G."/>
            <person name="Fraser C.M."/>
            <person name="Venter J.C."/>
            <person name="Davis R.W."/>
        </authorList>
    </citation>
    <scope>NUCLEOTIDE SEQUENCE [LARGE SCALE GENOMIC DNA]</scope>
    <source>
        <strain>cv. Columbia</strain>
    </source>
</reference>
<reference key="2">
    <citation type="journal article" date="2017" name="Plant J.">
        <title>Araport11: a complete reannotation of the Arabidopsis thaliana reference genome.</title>
        <authorList>
            <person name="Cheng C.Y."/>
            <person name="Krishnakumar V."/>
            <person name="Chan A.P."/>
            <person name="Thibaud-Nissen F."/>
            <person name="Schobel S."/>
            <person name="Town C.D."/>
        </authorList>
    </citation>
    <scope>GENOME REANNOTATION</scope>
    <source>
        <strain>cv. Columbia</strain>
    </source>
</reference>
<reference key="3">
    <citation type="journal article" date="2002" name="Science">
        <title>Functional annotation of a full-length Arabidopsis cDNA collection.</title>
        <authorList>
            <person name="Seki M."/>
            <person name="Narusaka M."/>
            <person name="Kamiya A."/>
            <person name="Ishida J."/>
            <person name="Satou M."/>
            <person name="Sakurai T."/>
            <person name="Nakajima M."/>
            <person name="Enju A."/>
            <person name="Akiyama K."/>
            <person name="Oono Y."/>
            <person name="Muramatsu M."/>
            <person name="Hayashizaki Y."/>
            <person name="Kawai J."/>
            <person name="Carninci P."/>
            <person name="Itoh M."/>
            <person name="Ishii Y."/>
            <person name="Arakawa T."/>
            <person name="Shibata K."/>
            <person name="Shinagawa A."/>
            <person name="Shinozaki K."/>
        </authorList>
    </citation>
    <scope>NUCLEOTIDE SEQUENCE [LARGE SCALE MRNA]</scope>
    <source>
        <strain>cv. Columbia</strain>
    </source>
</reference>
<reference key="4">
    <citation type="journal article" date="2003" name="Science">
        <title>Empirical analysis of transcriptional activity in the Arabidopsis genome.</title>
        <authorList>
            <person name="Yamada K."/>
            <person name="Lim J."/>
            <person name="Dale J.M."/>
            <person name="Chen H."/>
            <person name="Shinn P."/>
            <person name="Palm C.J."/>
            <person name="Southwick A.M."/>
            <person name="Wu H.C."/>
            <person name="Kim C.J."/>
            <person name="Nguyen M."/>
            <person name="Pham P.K."/>
            <person name="Cheuk R.F."/>
            <person name="Karlin-Newmann G."/>
            <person name="Liu S.X."/>
            <person name="Lam B."/>
            <person name="Sakano H."/>
            <person name="Wu T."/>
            <person name="Yu G."/>
            <person name="Miranda M."/>
            <person name="Quach H.L."/>
            <person name="Tripp M."/>
            <person name="Chang C.H."/>
            <person name="Lee J.M."/>
            <person name="Toriumi M.J."/>
            <person name="Chan M.M."/>
            <person name="Tang C.C."/>
            <person name="Onodera C.S."/>
            <person name="Deng J.M."/>
            <person name="Akiyama K."/>
            <person name="Ansari Y."/>
            <person name="Arakawa T."/>
            <person name="Banh J."/>
            <person name="Banno F."/>
            <person name="Bowser L."/>
            <person name="Brooks S.Y."/>
            <person name="Carninci P."/>
            <person name="Chao Q."/>
            <person name="Choy N."/>
            <person name="Enju A."/>
            <person name="Goldsmith A.D."/>
            <person name="Gurjal M."/>
            <person name="Hansen N.F."/>
            <person name="Hayashizaki Y."/>
            <person name="Johnson-Hopson C."/>
            <person name="Hsuan V.W."/>
            <person name="Iida K."/>
            <person name="Karnes M."/>
            <person name="Khan S."/>
            <person name="Koesema E."/>
            <person name="Ishida J."/>
            <person name="Jiang P.X."/>
            <person name="Jones T."/>
            <person name="Kawai J."/>
            <person name="Kamiya A."/>
            <person name="Meyers C."/>
            <person name="Nakajima M."/>
            <person name="Narusaka M."/>
            <person name="Seki M."/>
            <person name="Sakurai T."/>
            <person name="Satou M."/>
            <person name="Tamse R."/>
            <person name="Vaysberg M."/>
            <person name="Wallender E.K."/>
            <person name="Wong C."/>
            <person name="Yamamura Y."/>
            <person name="Yuan S."/>
            <person name="Shinozaki K."/>
            <person name="Davis R.W."/>
            <person name="Theologis A."/>
            <person name="Ecker J.R."/>
        </authorList>
    </citation>
    <scope>NUCLEOTIDE SEQUENCE [LARGE SCALE MRNA]</scope>
    <source>
        <strain>cv. Columbia</strain>
    </source>
</reference>
<reference key="5">
    <citation type="journal article" date="2003" name="Plant J.">
        <title>Protein interaction analysis of SCF ubiquitin E3 ligase subunits from Arabidopsis.</title>
        <authorList>
            <person name="Risseeuw E.P."/>
            <person name="Daskalchuk T.E."/>
            <person name="Banks T.W."/>
            <person name="Liu E."/>
            <person name="Cotelesage J."/>
            <person name="Hellmann H."/>
            <person name="Estelle M."/>
            <person name="Somers D.E."/>
            <person name="Crosby W.L."/>
        </authorList>
    </citation>
    <scope>INTERACTION WITH SKP1A/ASK1</scope>
</reference>